<evidence type="ECO:0000255" key="1">
    <source>
        <dbReference type="HAMAP-Rule" id="MF_01366"/>
    </source>
</evidence>
<evidence type="ECO:0000305" key="2"/>
<gene>
    <name evidence="1" type="primary">rplM</name>
    <name type="ordered locus">YPO3563</name>
    <name type="ordered locus">y0134</name>
    <name type="ordered locus">YP_3818</name>
</gene>
<proteinExistence type="inferred from homology"/>
<comment type="function">
    <text evidence="1">This protein is one of the early assembly proteins of the 50S ribosomal subunit, although it is not seen to bind rRNA by itself. It is important during the early stages of 50S assembly.</text>
</comment>
<comment type="subunit">
    <text evidence="1">Part of the 50S ribosomal subunit.</text>
</comment>
<comment type="similarity">
    <text evidence="1">Belongs to the universal ribosomal protein uL13 family.</text>
</comment>
<comment type="sequence caution" evidence="2">
    <conflict type="erroneous initiation">
        <sequence resource="EMBL-CDS" id="AAM83728"/>
    </conflict>
</comment>
<comment type="sequence caution" evidence="2">
    <conflict type="erroneous initiation">
        <sequence resource="EMBL-CDS" id="AAS63965"/>
    </conflict>
</comment>
<sequence length="142" mass="16032">MKTFTAKPETVKRDWYVVDASGKTLGRLATELARRLRGKHKAEYTPHVDTGDYIIVLNAEKVAVTGNKRTDKIYYHHTGFVGGIKQATFEEMIARRPERVIEIAVKGMLPKGPLGRAMYRKLKVYAGTEHNHAAQQPQVLDI</sequence>
<name>RL13_YERPE</name>
<keyword id="KW-1185">Reference proteome</keyword>
<keyword id="KW-0687">Ribonucleoprotein</keyword>
<keyword id="KW-0689">Ribosomal protein</keyword>
<protein>
    <recommendedName>
        <fullName evidence="1">Large ribosomal subunit protein uL13</fullName>
    </recommendedName>
    <alternativeName>
        <fullName evidence="2">50S ribosomal protein L13</fullName>
    </alternativeName>
</protein>
<organism>
    <name type="scientific">Yersinia pestis</name>
    <dbReference type="NCBI Taxonomy" id="632"/>
    <lineage>
        <taxon>Bacteria</taxon>
        <taxon>Pseudomonadati</taxon>
        <taxon>Pseudomonadota</taxon>
        <taxon>Gammaproteobacteria</taxon>
        <taxon>Enterobacterales</taxon>
        <taxon>Yersiniaceae</taxon>
        <taxon>Yersinia</taxon>
    </lineage>
</organism>
<reference key="1">
    <citation type="journal article" date="2001" name="Nature">
        <title>Genome sequence of Yersinia pestis, the causative agent of plague.</title>
        <authorList>
            <person name="Parkhill J."/>
            <person name="Wren B.W."/>
            <person name="Thomson N.R."/>
            <person name="Titball R.W."/>
            <person name="Holden M.T.G."/>
            <person name="Prentice M.B."/>
            <person name="Sebaihia M."/>
            <person name="James K.D."/>
            <person name="Churcher C.M."/>
            <person name="Mungall K.L."/>
            <person name="Baker S."/>
            <person name="Basham D."/>
            <person name="Bentley S.D."/>
            <person name="Brooks K."/>
            <person name="Cerdeno-Tarraga A.-M."/>
            <person name="Chillingworth T."/>
            <person name="Cronin A."/>
            <person name="Davies R.M."/>
            <person name="Davis P."/>
            <person name="Dougan G."/>
            <person name="Feltwell T."/>
            <person name="Hamlin N."/>
            <person name="Holroyd S."/>
            <person name="Jagels K."/>
            <person name="Karlyshev A.V."/>
            <person name="Leather S."/>
            <person name="Moule S."/>
            <person name="Oyston P.C.F."/>
            <person name="Quail M.A."/>
            <person name="Rutherford K.M."/>
            <person name="Simmonds M."/>
            <person name="Skelton J."/>
            <person name="Stevens K."/>
            <person name="Whitehead S."/>
            <person name="Barrell B.G."/>
        </authorList>
    </citation>
    <scope>NUCLEOTIDE SEQUENCE [LARGE SCALE GENOMIC DNA]</scope>
    <source>
        <strain>CO-92 / Biovar Orientalis</strain>
    </source>
</reference>
<reference key="2">
    <citation type="journal article" date="2002" name="J. Bacteriol.">
        <title>Genome sequence of Yersinia pestis KIM.</title>
        <authorList>
            <person name="Deng W."/>
            <person name="Burland V."/>
            <person name="Plunkett G. III"/>
            <person name="Boutin A."/>
            <person name="Mayhew G.F."/>
            <person name="Liss P."/>
            <person name="Perna N.T."/>
            <person name="Rose D.J."/>
            <person name="Mau B."/>
            <person name="Zhou S."/>
            <person name="Schwartz D.C."/>
            <person name="Fetherston J.D."/>
            <person name="Lindler L.E."/>
            <person name="Brubaker R.R."/>
            <person name="Plano G.V."/>
            <person name="Straley S.C."/>
            <person name="McDonough K.A."/>
            <person name="Nilles M.L."/>
            <person name="Matson J.S."/>
            <person name="Blattner F.R."/>
            <person name="Perry R.D."/>
        </authorList>
    </citation>
    <scope>NUCLEOTIDE SEQUENCE [LARGE SCALE GENOMIC DNA]</scope>
    <source>
        <strain>KIM10+ / Biovar Mediaevalis</strain>
    </source>
</reference>
<reference key="3">
    <citation type="journal article" date="2004" name="DNA Res.">
        <title>Complete genome sequence of Yersinia pestis strain 91001, an isolate avirulent to humans.</title>
        <authorList>
            <person name="Song Y."/>
            <person name="Tong Z."/>
            <person name="Wang J."/>
            <person name="Wang L."/>
            <person name="Guo Z."/>
            <person name="Han Y."/>
            <person name="Zhang J."/>
            <person name="Pei D."/>
            <person name="Zhou D."/>
            <person name="Qin H."/>
            <person name="Pang X."/>
            <person name="Han Y."/>
            <person name="Zhai J."/>
            <person name="Li M."/>
            <person name="Cui B."/>
            <person name="Qi Z."/>
            <person name="Jin L."/>
            <person name="Dai R."/>
            <person name="Chen F."/>
            <person name="Li S."/>
            <person name="Ye C."/>
            <person name="Du Z."/>
            <person name="Lin W."/>
            <person name="Wang J."/>
            <person name="Yu J."/>
            <person name="Yang H."/>
            <person name="Wang J."/>
            <person name="Huang P."/>
            <person name="Yang R."/>
        </authorList>
    </citation>
    <scope>NUCLEOTIDE SEQUENCE [LARGE SCALE GENOMIC DNA]</scope>
    <source>
        <strain>91001 / Biovar Mediaevalis</strain>
    </source>
</reference>
<accession>Q0WB88</accession>
<accession>Q74PS0</accession>
<accession>Q8D1R2</accession>
<dbReference type="EMBL" id="AL590842">
    <property type="protein sequence ID" value="CAL22151.1"/>
    <property type="molecule type" value="Genomic_DNA"/>
</dbReference>
<dbReference type="EMBL" id="AE009952">
    <property type="protein sequence ID" value="AAM83728.1"/>
    <property type="status" value="ALT_INIT"/>
    <property type="molecule type" value="Genomic_DNA"/>
</dbReference>
<dbReference type="EMBL" id="AE017042">
    <property type="protein sequence ID" value="AAS63965.1"/>
    <property type="status" value="ALT_INIT"/>
    <property type="molecule type" value="Genomic_DNA"/>
</dbReference>
<dbReference type="PIR" id="AD0433">
    <property type="entry name" value="AD0433"/>
</dbReference>
<dbReference type="RefSeq" id="WP_002210132.1">
    <property type="nucleotide sequence ID" value="NZ_WUCM01000069.1"/>
</dbReference>
<dbReference type="RefSeq" id="YP_002348450.1">
    <property type="nucleotide sequence ID" value="NC_003143.1"/>
</dbReference>
<dbReference type="SMR" id="Q0WB88"/>
<dbReference type="STRING" id="214092.YPO3563"/>
<dbReference type="PaxDb" id="214092-YPO3563"/>
<dbReference type="EnsemblBacteria" id="AAS63965">
    <property type="protein sequence ID" value="AAS63965"/>
    <property type="gene ID" value="YP_3818"/>
</dbReference>
<dbReference type="GeneID" id="96662998"/>
<dbReference type="KEGG" id="ype:YPO3563"/>
<dbReference type="KEGG" id="ypk:y0134"/>
<dbReference type="KEGG" id="ypm:YP_3818"/>
<dbReference type="PATRIC" id="fig|214092.21.peg.4057"/>
<dbReference type="eggNOG" id="COG0102">
    <property type="taxonomic scope" value="Bacteria"/>
</dbReference>
<dbReference type="HOGENOM" id="CLU_082184_2_2_6"/>
<dbReference type="OMA" id="HKPIYTP"/>
<dbReference type="OrthoDB" id="9801330at2"/>
<dbReference type="Proteomes" id="UP000000815">
    <property type="component" value="Chromosome"/>
</dbReference>
<dbReference type="Proteomes" id="UP000001019">
    <property type="component" value="Chromosome"/>
</dbReference>
<dbReference type="Proteomes" id="UP000002490">
    <property type="component" value="Chromosome"/>
</dbReference>
<dbReference type="GO" id="GO:0022625">
    <property type="term" value="C:cytosolic large ribosomal subunit"/>
    <property type="evidence" value="ECO:0000318"/>
    <property type="project" value="GO_Central"/>
</dbReference>
<dbReference type="GO" id="GO:0005840">
    <property type="term" value="C:ribosome"/>
    <property type="evidence" value="ECO:0000318"/>
    <property type="project" value="GO_Central"/>
</dbReference>
<dbReference type="GO" id="GO:0003729">
    <property type="term" value="F:mRNA binding"/>
    <property type="evidence" value="ECO:0000318"/>
    <property type="project" value="GO_Central"/>
</dbReference>
<dbReference type="GO" id="GO:0003735">
    <property type="term" value="F:structural constituent of ribosome"/>
    <property type="evidence" value="ECO:0000318"/>
    <property type="project" value="GO_Central"/>
</dbReference>
<dbReference type="GO" id="GO:0017148">
    <property type="term" value="P:negative regulation of translation"/>
    <property type="evidence" value="ECO:0000318"/>
    <property type="project" value="GO_Central"/>
</dbReference>
<dbReference type="GO" id="GO:0006412">
    <property type="term" value="P:translation"/>
    <property type="evidence" value="ECO:0007669"/>
    <property type="project" value="UniProtKB-UniRule"/>
</dbReference>
<dbReference type="CDD" id="cd00392">
    <property type="entry name" value="Ribosomal_L13"/>
    <property type="match status" value="1"/>
</dbReference>
<dbReference type="FunFam" id="3.90.1180.10:FF:000001">
    <property type="entry name" value="50S ribosomal protein L13"/>
    <property type="match status" value="1"/>
</dbReference>
<dbReference type="Gene3D" id="3.90.1180.10">
    <property type="entry name" value="Ribosomal protein L13"/>
    <property type="match status" value="1"/>
</dbReference>
<dbReference type="HAMAP" id="MF_01366">
    <property type="entry name" value="Ribosomal_uL13"/>
    <property type="match status" value="1"/>
</dbReference>
<dbReference type="InterPro" id="IPR005822">
    <property type="entry name" value="Ribosomal_uL13"/>
</dbReference>
<dbReference type="InterPro" id="IPR005823">
    <property type="entry name" value="Ribosomal_uL13_bac-type"/>
</dbReference>
<dbReference type="InterPro" id="IPR023563">
    <property type="entry name" value="Ribosomal_uL13_CS"/>
</dbReference>
<dbReference type="InterPro" id="IPR036899">
    <property type="entry name" value="Ribosomal_uL13_sf"/>
</dbReference>
<dbReference type="NCBIfam" id="TIGR01066">
    <property type="entry name" value="rplM_bact"/>
    <property type="match status" value="1"/>
</dbReference>
<dbReference type="PANTHER" id="PTHR11545:SF2">
    <property type="entry name" value="LARGE RIBOSOMAL SUBUNIT PROTEIN UL13M"/>
    <property type="match status" value="1"/>
</dbReference>
<dbReference type="PANTHER" id="PTHR11545">
    <property type="entry name" value="RIBOSOMAL PROTEIN L13"/>
    <property type="match status" value="1"/>
</dbReference>
<dbReference type="Pfam" id="PF00572">
    <property type="entry name" value="Ribosomal_L13"/>
    <property type="match status" value="1"/>
</dbReference>
<dbReference type="PIRSF" id="PIRSF002181">
    <property type="entry name" value="Ribosomal_L13"/>
    <property type="match status" value="1"/>
</dbReference>
<dbReference type="SUPFAM" id="SSF52161">
    <property type="entry name" value="Ribosomal protein L13"/>
    <property type="match status" value="1"/>
</dbReference>
<dbReference type="PROSITE" id="PS00783">
    <property type="entry name" value="RIBOSOMAL_L13"/>
    <property type="match status" value="1"/>
</dbReference>
<feature type="chain" id="PRO_0000261832" description="Large ribosomal subunit protein uL13">
    <location>
        <begin position="1"/>
        <end position="142"/>
    </location>
</feature>